<accession>Q9CH84</accession>
<gene>
    <name evidence="1" type="primary">xseA</name>
    <name type="ordered locus">LL0854</name>
    <name type="ORF">L0254</name>
</gene>
<keyword id="KW-0963">Cytoplasm</keyword>
<keyword id="KW-0269">Exonuclease</keyword>
<keyword id="KW-0378">Hydrolase</keyword>
<keyword id="KW-0540">Nuclease</keyword>
<keyword id="KW-1185">Reference proteome</keyword>
<organism>
    <name type="scientific">Lactococcus lactis subsp. lactis (strain IL1403)</name>
    <name type="common">Streptococcus lactis</name>
    <dbReference type="NCBI Taxonomy" id="272623"/>
    <lineage>
        <taxon>Bacteria</taxon>
        <taxon>Bacillati</taxon>
        <taxon>Bacillota</taxon>
        <taxon>Bacilli</taxon>
        <taxon>Lactobacillales</taxon>
        <taxon>Streptococcaceae</taxon>
        <taxon>Lactococcus</taxon>
    </lineage>
</organism>
<reference key="1">
    <citation type="journal article" date="2001" name="Genome Res.">
        <title>The complete genome sequence of the lactic acid bacterium Lactococcus lactis ssp. lactis IL1403.</title>
        <authorList>
            <person name="Bolotin A."/>
            <person name="Wincker P."/>
            <person name="Mauger S."/>
            <person name="Jaillon O."/>
            <person name="Malarme K."/>
            <person name="Weissenbach J."/>
            <person name="Ehrlich S.D."/>
            <person name="Sorokin A."/>
        </authorList>
    </citation>
    <scope>NUCLEOTIDE SEQUENCE [LARGE SCALE GENOMIC DNA]</scope>
    <source>
        <strain>IL1403</strain>
    </source>
</reference>
<proteinExistence type="inferred from homology"/>
<sequence>MTEYLSVSTLTKYLKAKFDRDRYLERVYLTGEISNFRRRPNHQYFALKDEGAVIQATMWAGQFRKLDFELEEGMKVLAVGRISIYPPSGSYSINIESLVPDGVGALAVKFEQLKKKLTAEGLFEQRWKQTLPQFSKKIAVVTSPSGAVIRDIITTVQRRFPMSQIVLYPTKVQGQGSAEEIAGNIRRANQRGDFDVMIIGRGGGSIEDLWGFNEEIVVRAIFESRIPIISSVGHETDVTLADFVADSRAATPTAAAELATPNTKVDLINWANEQEKRLFNRLTHVIKIRRERVDKLSQSVVFRQPERLYDGHLQKLDRLCERLSVLTENKVANMKHRYELSAGKLIPTYGKIVEAKKNKTEQLYQSLLLLDISKIKARGFSLVTDEKGKIIKSVSDVKKGQTLDVELTDGKVIVEVK</sequence>
<comment type="function">
    <text evidence="1">Bidirectionally degrades single-stranded DNA into large acid-insoluble oligonucleotides, which are then degraded further into small acid-soluble oligonucleotides.</text>
</comment>
<comment type="catalytic activity">
    <reaction evidence="1">
        <text>Exonucleolytic cleavage in either 5'- to 3'- or 3'- to 5'-direction to yield nucleoside 5'-phosphates.</text>
        <dbReference type="EC" id="3.1.11.6"/>
    </reaction>
</comment>
<comment type="subunit">
    <text evidence="1">Heterooligomer composed of large and small subunits.</text>
</comment>
<comment type="subcellular location">
    <subcellularLocation>
        <location evidence="1">Cytoplasm</location>
    </subcellularLocation>
</comment>
<comment type="similarity">
    <text evidence="1">Belongs to the XseA family.</text>
</comment>
<feature type="chain" id="PRO_0000197852" description="Exodeoxyribonuclease 7 large subunit">
    <location>
        <begin position="1"/>
        <end position="417"/>
    </location>
</feature>
<protein>
    <recommendedName>
        <fullName evidence="1">Exodeoxyribonuclease 7 large subunit</fullName>
        <ecNumber evidence="1">3.1.11.6</ecNumber>
    </recommendedName>
    <alternativeName>
        <fullName evidence="1">Exodeoxyribonuclease VII large subunit</fullName>
        <shortName evidence="1">Exonuclease VII large subunit</shortName>
    </alternativeName>
</protein>
<name>EX7L_LACLA</name>
<evidence type="ECO:0000255" key="1">
    <source>
        <dbReference type="HAMAP-Rule" id="MF_00378"/>
    </source>
</evidence>
<dbReference type="EC" id="3.1.11.6" evidence="1"/>
<dbReference type="EMBL" id="AE005176">
    <property type="protein sequence ID" value="AAK04952.1"/>
    <property type="molecule type" value="Genomic_DNA"/>
</dbReference>
<dbReference type="PIR" id="F86731">
    <property type="entry name" value="F86731"/>
</dbReference>
<dbReference type="RefSeq" id="NP_267010.1">
    <property type="nucleotide sequence ID" value="NC_002662.1"/>
</dbReference>
<dbReference type="RefSeq" id="WP_010905593.1">
    <property type="nucleotide sequence ID" value="NC_002662.1"/>
</dbReference>
<dbReference type="SMR" id="Q9CH84"/>
<dbReference type="PaxDb" id="272623-L0254"/>
<dbReference type="EnsemblBacteria" id="AAK04952">
    <property type="protein sequence ID" value="AAK04952"/>
    <property type="gene ID" value="L0254"/>
</dbReference>
<dbReference type="KEGG" id="lla:L0254"/>
<dbReference type="PATRIC" id="fig|272623.7.peg.915"/>
<dbReference type="eggNOG" id="COG1570">
    <property type="taxonomic scope" value="Bacteria"/>
</dbReference>
<dbReference type="HOGENOM" id="CLU_023625_3_1_9"/>
<dbReference type="OrthoDB" id="9802795at2"/>
<dbReference type="Proteomes" id="UP000002196">
    <property type="component" value="Chromosome"/>
</dbReference>
<dbReference type="GO" id="GO:0005737">
    <property type="term" value="C:cytoplasm"/>
    <property type="evidence" value="ECO:0007669"/>
    <property type="project" value="UniProtKB-SubCell"/>
</dbReference>
<dbReference type="GO" id="GO:0009318">
    <property type="term" value="C:exodeoxyribonuclease VII complex"/>
    <property type="evidence" value="ECO:0007669"/>
    <property type="project" value="InterPro"/>
</dbReference>
<dbReference type="GO" id="GO:0008855">
    <property type="term" value="F:exodeoxyribonuclease VII activity"/>
    <property type="evidence" value="ECO:0007669"/>
    <property type="project" value="UniProtKB-UniRule"/>
</dbReference>
<dbReference type="GO" id="GO:0003676">
    <property type="term" value="F:nucleic acid binding"/>
    <property type="evidence" value="ECO:0007669"/>
    <property type="project" value="InterPro"/>
</dbReference>
<dbReference type="GO" id="GO:0006308">
    <property type="term" value="P:DNA catabolic process"/>
    <property type="evidence" value="ECO:0007669"/>
    <property type="project" value="UniProtKB-UniRule"/>
</dbReference>
<dbReference type="CDD" id="cd04489">
    <property type="entry name" value="ExoVII_LU_OBF"/>
    <property type="match status" value="1"/>
</dbReference>
<dbReference type="HAMAP" id="MF_00378">
    <property type="entry name" value="Exonuc_7_L"/>
    <property type="match status" value="1"/>
</dbReference>
<dbReference type="InterPro" id="IPR003753">
    <property type="entry name" value="Exonuc_VII_L"/>
</dbReference>
<dbReference type="InterPro" id="IPR020579">
    <property type="entry name" value="Exonuc_VII_lsu_C"/>
</dbReference>
<dbReference type="InterPro" id="IPR025824">
    <property type="entry name" value="OB-fold_nuc-bd_dom"/>
</dbReference>
<dbReference type="NCBIfam" id="TIGR00237">
    <property type="entry name" value="xseA"/>
    <property type="match status" value="1"/>
</dbReference>
<dbReference type="PANTHER" id="PTHR30008">
    <property type="entry name" value="EXODEOXYRIBONUCLEASE 7 LARGE SUBUNIT"/>
    <property type="match status" value="1"/>
</dbReference>
<dbReference type="PANTHER" id="PTHR30008:SF0">
    <property type="entry name" value="EXODEOXYRIBONUCLEASE 7 LARGE SUBUNIT"/>
    <property type="match status" value="1"/>
</dbReference>
<dbReference type="Pfam" id="PF02601">
    <property type="entry name" value="Exonuc_VII_L"/>
    <property type="match status" value="1"/>
</dbReference>
<dbReference type="Pfam" id="PF13742">
    <property type="entry name" value="tRNA_anti_2"/>
    <property type="match status" value="1"/>
</dbReference>